<evidence type="ECO:0000255" key="1">
    <source>
        <dbReference type="HAMAP-Rule" id="MF_00355"/>
    </source>
</evidence>
<keyword id="KW-0004">4Fe-4S</keyword>
<keyword id="KW-0067">ATP-binding</keyword>
<keyword id="KW-0149">Chlorophyll biosynthesis</keyword>
<keyword id="KW-0408">Iron</keyword>
<keyword id="KW-0411">Iron-sulfur</keyword>
<keyword id="KW-0460">Magnesium</keyword>
<keyword id="KW-0479">Metal-binding</keyword>
<keyword id="KW-0547">Nucleotide-binding</keyword>
<keyword id="KW-0560">Oxidoreductase</keyword>
<keyword id="KW-0602">Photosynthesis</keyword>
<keyword id="KW-1185">Reference proteome</keyword>
<name>CHLL_PROM0</name>
<protein>
    <recommendedName>
        <fullName evidence="1">Light-independent protochlorophyllide reductase iron-sulfur ATP-binding protein</fullName>
        <shortName evidence="1">DPOR subunit L</shortName>
        <shortName evidence="1">LI-POR subunit L</shortName>
        <ecNumber evidence="1">1.3.7.7</ecNumber>
    </recommendedName>
</protein>
<sequence>MTSTINRPLDGEGSVQVKQDPKINIEEGALVIAVYGKGGIGKSTTSSNLSAAFSKLGKKVLQIGCDPKHDSTFTLTHKMVPTVIDILEEVDFHSEELRPTDFMFEGFNGVMCVESGGPPAGTGCGGYVTGQTVKLLKEHHLLEDTDVVIFDVLGDVVCGGFAAPLQHANYCLIVTANDFDSIFAMNRIVSAIKAKAKNYKVRLGGVVANRSKDTDQIDKFNERTGLKTMAHFKDVDAIRRSRLKKCTIFEMEPTEDVIEVQNEYLSLAKNMLEKVEPLEGNPLKDREIFDLLGFD</sequence>
<proteinExistence type="inferred from homology"/>
<organism>
    <name type="scientific">Prochlorococcus marinus (strain MIT 9301)</name>
    <dbReference type="NCBI Taxonomy" id="167546"/>
    <lineage>
        <taxon>Bacteria</taxon>
        <taxon>Bacillati</taxon>
        <taxon>Cyanobacteriota</taxon>
        <taxon>Cyanophyceae</taxon>
        <taxon>Synechococcales</taxon>
        <taxon>Prochlorococcaceae</taxon>
        <taxon>Prochlorococcus</taxon>
    </lineage>
</organism>
<feature type="chain" id="PRO_0000324060" description="Light-independent protochlorophyllide reductase iron-sulfur ATP-binding protein">
    <location>
        <begin position="1"/>
        <end position="295"/>
    </location>
</feature>
<feature type="binding site" evidence="1">
    <location>
        <begin position="39"/>
        <end position="44"/>
    </location>
    <ligand>
        <name>ATP</name>
        <dbReference type="ChEBI" id="CHEBI:30616"/>
    </ligand>
</feature>
<feature type="binding site" evidence="1">
    <location>
        <position position="43"/>
    </location>
    <ligand>
        <name>Mg(2+)</name>
        <dbReference type="ChEBI" id="CHEBI:18420"/>
    </ligand>
</feature>
<feature type="binding site" evidence="1">
    <location>
        <position position="68"/>
    </location>
    <ligand>
        <name>ATP</name>
        <dbReference type="ChEBI" id="CHEBI:30616"/>
    </ligand>
</feature>
<feature type="binding site" evidence="1">
    <location>
        <position position="124"/>
    </location>
    <ligand>
        <name>[4Fe-4S] cluster</name>
        <dbReference type="ChEBI" id="CHEBI:49883"/>
        <note>ligand shared between dimeric partners</note>
    </ligand>
</feature>
<feature type="binding site" evidence="1">
    <location>
        <position position="158"/>
    </location>
    <ligand>
        <name>[4Fe-4S] cluster</name>
        <dbReference type="ChEBI" id="CHEBI:49883"/>
        <note>ligand shared between dimeric partners</note>
    </ligand>
</feature>
<feature type="binding site" evidence="1">
    <location>
        <begin position="209"/>
        <end position="210"/>
    </location>
    <ligand>
        <name>ATP</name>
        <dbReference type="ChEBI" id="CHEBI:30616"/>
    </ligand>
</feature>
<reference key="1">
    <citation type="journal article" date="2007" name="PLoS Genet.">
        <title>Patterns and implications of gene gain and loss in the evolution of Prochlorococcus.</title>
        <authorList>
            <person name="Kettler G.C."/>
            <person name="Martiny A.C."/>
            <person name="Huang K."/>
            <person name="Zucker J."/>
            <person name="Coleman M.L."/>
            <person name="Rodrigue S."/>
            <person name="Chen F."/>
            <person name="Lapidus A."/>
            <person name="Ferriera S."/>
            <person name="Johnson J."/>
            <person name="Steglich C."/>
            <person name="Church G.M."/>
            <person name="Richardson P."/>
            <person name="Chisholm S.W."/>
        </authorList>
    </citation>
    <scope>NUCLEOTIDE SEQUENCE [LARGE SCALE GENOMIC DNA]</scope>
    <source>
        <strain>MIT 9301</strain>
    </source>
</reference>
<accession>A3PBR7</accession>
<gene>
    <name evidence="1" type="primary">chlL</name>
    <name type="ordered locus">P9301_05691</name>
</gene>
<comment type="function">
    <text evidence="1">Component of the dark-operative protochlorophyllide reductase (DPOR) that uses Mg-ATP and reduced ferredoxin to reduce ring D of protochlorophyllide (Pchlide) to form chlorophyllide a (Chlide). This reaction is light-independent. The L component serves as a unique electron donor to the NB-component of the complex, and binds Mg-ATP.</text>
</comment>
<comment type="catalytic activity">
    <reaction evidence="1">
        <text>chlorophyllide a + oxidized 2[4Fe-4S]-[ferredoxin] + 2 ADP + 2 phosphate = protochlorophyllide a + reduced 2[4Fe-4S]-[ferredoxin] + 2 ATP + 2 H2O</text>
        <dbReference type="Rhea" id="RHEA:28202"/>
        <dbReference type="Rhea" id="RHEA-COMP:10002"/>
        <dbReference type="Rhea" id="RHEA-COMP:10004"/>
        <dbReference type="ChEBI" id="CHEBI:15377"/>
        <dbReference type="ChEBI" id="CHEBI:30616"/>
        <dbReference type="ChEBI" id="CHEBI:33722"/>
        <dbReference type="ChEBI" id="CHEBI:33723"/>
        <dbReference type="ChEBI" id="CHEBI:43474"/>
        <dbReference type="ChEBI" id="CHEBI:83348"/>
        <dbReference type="ChEBI" id="CHEBI:83350"/>
        <dbReference type="ChEBI" id="CHEBI:456216"/>
        <dbReference type="EC" id="1.3.7.7"/>
    </reaction>
</comment>
<comment type="cofactor">
    <cofactor evidence="1">
        <name>[4Fe-4S] cluster</name>
        <dbReference type="ChEBI" id="CHEBI:49883"/>
    </cofactor>
    <text evidence="1">Binds 1 [4Fe-4S] cluster per dimer.</text>
</comment>
<comment type="pathway">
    <text evidence="1">Porphyrin-containing compound metabolism; chlorophyll biosynthesis (light-independent).</text>
</comment>
<comment type="subunit">
    <text evidence="1">Homodimer. Protochlorophyllide reductase is composed of three subunits; ChlL, ChlN and ChlB.</text>
</comment>
<comment type="similarity">
    <text evidence="1">Belongs to the NifH/BchL/ChlL family.</text>
</comment>
<dbReference type="EC" id="1.3.7.7" evidence="1"/>
<dbReference type="EMBL" id="CP000576">
    <property type="protein sequence ID" value="ABO17192.1"/>
    <property type="molecule type" value="Genomic_DNA"/>
</dbReference>
<dbReference type="SMR" id="A3PBR7"/>
<dbReference type="STRING" id="167546.P9301_05691"/>
<dbReference type="KEGG" id="pmg:P9301_05691"/>
<dbReference type="eggNOG" id="COG1348">
    <property type="taxonomic scope" value="Bacteria"/>
</dbReference>
<dbReference type="HOGENOM" id="CLU_059373_2_0_3"/>
<dbReference type="OrthoDB" id="9778641at2"/>
<dbReference type="UniPathway" id="UPA00670"/>
<dbReference type="Proteomes" id="UP000001430">
    <property type="component" value="Chromosome"/>
</dbReference>
<dbReference type="GO" id="GO:0051539">
    <property type="term" value="F:4 iron, 4 sulfur cluster binding"/>
    <property type="evidence" value="ECO:0007669"/>
    <property type="project" value="UniProtKB-UniRule"/>
</dbReference>
<dbReference type="GO" id="GO:0005524">
    <property type="term" value="F:ATP binding"/>
    <property type="evidence" value="ECO:0007669"/>
    <property type="project" value="UniProtKB-UniRule"/>
</dbReference>
<dbReference type="GO" id="GO:0046872">
    <property type="term" value="F:metal ion binding"/>
    <property type="evidence" value="ECO:0007669"/>
    <property type="project" value="UniProtKB-KW"/>
</dbReference>
<dbReference type="GO" id="GO:0016730">
    <property type="term" value="F:oxidoreductase activity, acting on iron-sulfur proteins as donors"/>
    <property type="evidence" value="ECO:0007669"/>
    <property type="project" value="InterPro"/>
</dbReference>
<dbReference type="GO" id="GO:0016636">
    <property type="term" value="F:oxidoreductase activity, acting on the CH-CH group of donors, iron-sulfur protein as acceptor"/>
    <property type="evidence" value="ECO:0007669"/>
    <property type="project" value="UniProtKB-UniRule"/>
</dbReference>
<dbReference type="GO" id="GO:0036068">
    <property type="term" value="P:light-independent chlorophyll biosynthetic process"/>
    <property type="evidence" value="ECO:0007669"/>
    <property type="project" value="UniProtKB-UniRule"/>
</dbReference>
<dbReference type="GO" id="GO:0019685">
    <property type="term" value="P:photosynthesis, dark reaction"/>
    <property type="evidence" value="ECO:0007669"/>
    <property type="project" value="InterPro"/>
</dbReference>
<dbReference type="CDD" id="cd02032">
    <property type="entry name" value="Bchl-like"/>
    <property type="match status" value="1"/>
</dbReference>
<dbReference type="Gene3D" id="3.40.50.300">
    <property type="entry name" value="P-loop containing nucleotide triphosphate hydrolases"/>
    <property type="match status" value="1"/>
</dbReference>
<dbReference type="HAMAP" id="MF_00355">
    <property type="entry name" value="ChlL_BchL"/>
    <property type="match status" value="1"/>
</dbReference>
<dbReference type="InterPro" id="IPR030655">
    <property type="entry name" value="NifH/chlL_CS"/>
</dbReference>
<dbReference type="InterPro" id="IPR000392">
    <property type="entry name" value="NifH/frxC"/>
</dbReference>
<dbReference type="InterPro" id="IPR027417">
    <property type="entry name" value="P-loop_NTPase"/>
</dbReference>
<dbReference type="InterPro" id="IPR005971">
    <property type="entry name" value="Protochlorophyllide_ATP-bd"/>
</dbReference>
<dbReference type="NCBIfam" id="TIGR01281">
    <property type="entry name" value="DPOR_bchL"/>
    <property type="match status" value="1"/>
</dbReference>
<dbReference type="PANTHER" id="PTHR42864">
    <property type="entry name" value="LIGHT-INDEPENDENT PROTOCHLOROPHYLLIDE REDUCTASE IRON-SULFUR ATP-BINDING PROTEIN"/>
    <property type="match status" value="1"/>
</dbReference>
<dbReference type="PANTHER" id="PTHR42864:SF2">
    <property type="entry name" value="LIGHT-INDEPENDENT PROTOCHLOROPHYLLIDE REDUCTASE IRON-SULFUR ATP-BINDING PROTEIN"/>
    <property type="match status" value="1"/>
</dbReference>
<dbReference type="Pfam" id="PF00142">
    <property type="entry name" value="Fer4_NifH"/>
    <property type="match status" value="1"/>
</dbReference>
<dbReference type="PIRSF" id="PIRSF000363">
    <property type="entry name" value="Nitrogenase_iron"/>
    <property type="match status" value="1"/>
</dbReference>
<dbReference type="PRINTS" id="PR00091">
    <property type="entry name" value="NITROGNASEII"/>
</dbReference>
<dbReference type="SUPFAM" id="SSF52540">
    <property type="entry name" value="P-loop containing nucleoside triphosphate hydrolases"/>
    <property type="match status" value="1"/>
</dbReference>
<dbReference type="PROSITE" id="PS00746">
    <property type="entry name" value="NIFH_FRXC_1"/>
    <property type="match status" value="1"/>
</dbReference>
<dbReference type="PROSITE" id="PS00692">
    <property type="entry name" value="NIFH_FRXC_2"/>
    <property type="match status" value="1"/>
</dbReference>
<dbReference type="PROSITE" id="PS51026">
    <property type="entry name" value="NIFH_FRXC_3"/>
    <property type="match status" value="1"/>
</dbReference>